<keyword id="KW-1185">Reference proteome</keyword>
<keyword id="KW-0964">Secreted</keyword>
<name>ESXE_MYCTO</name>
<sequence length="90" mass="9603">MDPTVLADAVARMAEFGRHVEELVAEIESLVTRLHVTWTGEGAAAHAEAQRHWAAGEAMMRQALAQLTAAGQSAHANYTGAMATNLGMWS</sequence>
<protein>
    <recommendedName>
        <fullName evidence="1">ESAT-6-like protein EsxE</fullName>
    </recommendedName>
</protein>
<dbReference type="EMBL" id="AE000516">
    <property type="protein sequence ID" value="AAK48387.1"/>
    <property type="molecule type" value="Genomic_DNA"/>
</dbReference>
<dbReference type="PIR" id="A70600">
    <property type="entry name" value="A70600"/>
</dbReference>
<dbReference type="RefSeq" id="WP_003400094.1">
    <property type="nucleotide sequence ID" value="NZ_KK341228.1"/>
</dbReference>
<dbReference type="SMR" id="P9WNH8"/>
<dbReference type="GeneID" id="45427904"/>
<dbReference type="KEGG" id="mtc:MT4023"/>
<dbReference type="PATRIC" id="fig|83331.31.peg.4328"/>
<dbReference type="HOGENOM" id="CLU_151185_4_1_11"/>
<dbReference type="Proteomes" id="UP000001020">
    <property type="component" value="Chromosome"/>
</dbReference>
<dbReference type="GO" id="GO:0005576">
    <property type="term" value="C:extracellular region"/>
    <property type="evidence" value="ECO:0007669"/>
    <property type="project" value="UniProtKB-SubCell"/>
</dbReference>
<dbReference type="Gene3D" id="1.10.287.1060">
    <property type="entry name" value="ESAT-6-like"/>
    <property type="match status" value="1"/>
</dbReference>
<dbReference type="InterPro" id="IPR036689">
    <property type="entry name" value="ESAT-6-like_sf"/>
</dbReference>
<dbReference type="InterPro" id="IPR010310">
    <property type="entry name" value="T7SS_ESAT-6-like"/>
</dbReference>
<dbReference type="Pfam" id="PF06013">
    <property type="entry name" value="WXG100"/>
    <property type="match status" value="1"/>
</dbReference>
<dbReference type="SUPFAM" id="SSF140453">
    <property type="entry name" value="EsxAB dimer-like"/>
    <property type="match status" value="1"/>
</dbReference>
<evidence type="ECO:0000250" key="1">
    <source>
        <dbReference type="UniProtKB" id="P9WNH9"/>
    </source>
</evidence>
<evidence type="ECO:0000269" key="2">
    <source>
    </source>
</evidence>
<evidence type="ECO:0000303" key="3">
    <source>
    </source>
</evidence>
<evidence type="ECO:0000305" key="4"/>
<evidence type="ECO:0000312" key="5">
    <source>
        <dbReference type="EMBL" id="AAK48387.1"/>
    </source>
</evidence>
<gene>
    <name evidence="3" type="primary">esxE</name>
    <name evidence="5" type="ordered locus">MT4023</name>
</gene>
<feature type="chain" id="PRO_0000427124" description="ESAT-6-like protein EsxE">
    <location>
        <begin position="1"/>
        <end position="90"/>
    </location>
</feature>
<reference key="1">
    <citation type="journal article" date="2002" name="J. Bacteriol.">
        <title>Whole-genome comparison of Mycobacterium tuberculosis clinical and laboratory strains.</title>
        <authorList>
            <person name="Fleischmann R.D."/>
            <person name="Alland D."/>
            <person name="Eisen J.A."/>
            <person name="Carpenter L."/>
            <person name="White O."/>
            <person name="Peterson J.D."/>
            <person name="DeBoy R.T."/>
            <person name="Dodson R.J."/>
            <person name="Gwinn M.L."/>
            <person name="Haft D.H."/>
            <person name="Hickey E.K."/>
            <person name="Kolonay J.F."/>
            <person name="Nelson W.C."/>
            <person name="Umayam L.A."/>
            <person name="Ermolaeva M.D."/>
            <person name="Salzberg S.L."/>
            <person name="Delcher A."/>
            <person name="Utterback T.R."/>
            <person name="Weidman J.F."/>
            <person name="Khouri H.M."/>
            <person name="Gill J."/>
            <person name="Mikula A."/>
            <person name="Bishai W."/>
            <person name="Jacobs W.R. Jr."/>
            <person name="Venter J.C."/>
            <person name="Fraser C.M."/>
        </authorList>
    </citation>
    <scope>NUCLEOTIDE SEQUENCE [LARGE SCALE GENOMIC DNA]</scope>
    <source>
        <strain>CDC 1551 / Oshkosh</strain>
    </source>
</reference>
<reference key="2">
    <citation type="journal article" date="2007" name="Infect. Immun.">
        <title>Characterization of the Mycobacterium tuberculosis sigma factor SigM by assessment of virulence and identification of SigM-dependent genes.</title>
        <authorList>
            <person name="Agarwal N."/>
            <person name="Woolwine S.C."/>
            <person name="Tyagi S."/>
            <person name="Bishai W.R."/>
        </authorList>
    </citation>
    <scope>INDUCTION</scope>
    <source>
        <strain>CDC 1551 / Oshkosh</strain>
    </source>
</reference>
<comment type="subcellular location">
    <subcellularLocation>
        <location evidence="1">Secreted</location>
    </subcellularLocation>
    <text evidence="1">Probably secreted via the ESX / type VII secretion system (T7SS).</text>
</comment>
<comment type="induction">
    <text evidence="2">Transcriptionally regulated by the sigma factor SigM.</text>
</comment>
<comment type="similarity">
    <text evidence="4">Belongs to the WXG100 family. ESAT-6 subfamily.</text>
</comment>
<accession>P9WNH8</accession>
<accession>L0TDW8</accession>
<accession>O05441</accession>
<proteinExistence type="evidence at transcript level"/>
<organism>
    <name type="scientific">Mycobacterium tuberculosis (strain CDC 1551 / Oshkosh)</name>
    <dbReference type="NCBI Taxonomy" id="83331"/>
    <lineage>
        <taxon>Bacteria</taxon>
        <taxon>Bacillati</taxon>
        <taxon>Actinomycetota</taxon>
        <taxon>Actinomycetes</taxon>
        <taxon>Mycobacteriales</taxon>
        <taxon>Mycobacteriaceae</taxon>
        <taxon>Mycobacterium</taxon>
        <taxon>Mycobacterium tuberculosis complex</taxon>
    </lineage>
</organism>